<keyword id="KW-0028">Amino-acid biosynthesis</keyword>
<keyword id="KW-0963">Cytoplasm</keyword>
<keyword id="KW-0368">Histidine biosynthesis</keyword>
<keyword id="KW-0456">Lyase</keyword>
<keyword id="KW-1185">Reference proteome</keyword>
<protein>
    <recommendedName>
        <fullName>Imidazole glycerol phosphate synthase subunit HisF</fullName>
        <ecNumber>4.3.2.10</ecNumber>
    </recommendedName>
    <alternativeName>
        <fullName>IGP synthase cyclase subunit</fullName>
    </alternativeName>
    <alternativeName>
        <fullName>IGP synthase subunit HisF</fullName>
    </alternativeName>
    <alternativeName>
        <fullName>ImGP synthase subunit HisF</fullName>
        <shortName>IGPS subunit HisF</shortName>
    </alternativeName>
</protein>
<gene>
    <name type="primary">hisF</name>
    <name type="ordered locus">STK_14620</name>
</gene>
<reference key="1">
    <citation type="journal article" date="2001" name="DNA Res.">
        <title>Complete genome sequence of an aerobic thermoacidophilic Crenarchaeon, Sulfolobus tokodaii strain7.</title>
        <authorList>
            <person name="Kawarabayasi Y."/>
            <person name="Hino Y."/>
            <person name="Horikawa H."/>
            <person name="Jin-no K."/>
            <person name="Takahashi M."/>
            <person name="Sekine M."/>
            <person name="Baba S."/>
            <person name="Ankai A."/>
            <person name="Kosugi H."/>
            <person name="Hosoyama A."/>
            <person name="Fukui S."/>
            <person name="Nagai Y."/>
            <person name="Nishijima K."/>
            <person name="Otsuka R."/>
            <person name="Nakazawa H."/>
            <person name="Takamiya M."/>
            <person name="Kato Y."/>
            <person name="Yoshizawa T."/>
            <person name="Tanaka T."/>
            <person name="Kudoh Y."/>
            <person name="Yamazaki J."/>
            <person name="Kushida N."/>
            <person name="Oguchi A."/>
            <person name="Aoki K."/>
            <person name="Masuda S."/>
            <person name="Yanagii M."/>
            <person name="Nishimura M."/>
            <person name="Yamagishi A."/>
            <person name="Oshima T."/>
            <person name="Kikuchi H."/>
        </authorList>
    </citation>
    <scope>NUCLEOTIDE SEQUENCE [LARGE SCALE GENOMIC DNA]</scope>
    <source>
        <strain>DSM 16993 / JCM 10545 / NBRC 100140 / 7</strain>
    </source>
</reference>
<feature type="chain" id="PRO_0000142291" description="Imidazole glycerol phosphate synthase subunit HisF">
    <location>
        <begin position="1"/>
        <end position="249"/>
    </location>
</feature>
<feature type="active site" evidence="2">
    <location>
        <position position="11"/>
    </location>
</feature>
<feature type="active site" evidence="2">
    <location>
        <position position="130"/>
    </location>
</feature>
<organism>
    <name type="scientific">Sulfurisphaera tokodaii (strain DSM 16993 / JCM 10545 / NBRC 100140 / 7)</name>
    <name type="common">Sulfolobus tokodaii</name>
    <dbReference type="NCBI Taxonomy" id="273063"/>
    <lineage>
        <taxon>Archaea</taxon>
        <taxon>Thermoproteota</taxon>
        <taxon>Thermoprotei</taxon>
        <taxon>Sulfolobales</taxon>
        <taxon>Sulfolobaceae</taxon>
        <taxon>Sulfurisphaera</taxon>
    </lineage>
</organism>
<proteinExistence type="inferred from homology"/>
<accession>Q970Z0</accession>
<accession>F9VNE3</accession>
<comment type="function">
    <text evidence="1">IGPS catalyzes the conversion of PRFAR and glutamine to IGP, AICAR and glutamate. The HisF subunit catalyzes the cyclization activity that produces IGP and AICAR from PRFAR using the ammonia provided by the HisH subunit (By similarity).</text>
</comment>
<comment type="catalytic activity">
    <reaction>
        <text>5-[(5-phospho-1-deoxy-D-ribulos-1-ylimino)methylamino]-1-(5-phospho-beta-D-ribosyl)imidazole-4-carboxamide + L-glutamine = D-erythro-1-(imidazol-4-yl)glycerol 3-phosphate + 5-amino-1-(5-phospho-beta-D-ribosyl)imidazole-4-carboxamide + L-glutamate + H(+)</text>
        <dbReference type="Rhea" id="RHEA:24793"/>
        <dbReference type="ChEBI" id="CHEBI:15378"/>
        <dbReference type="ChEBI" id="CHEBI:29985"/>
        <dbReference type="ChEBI" id="CHEBI:58278"/>
        <dbReference type="ChEBI" id="CHEBI:58359"/>
        <dbReference type="ChEBI" id="CHEBI:58475"/>
        <dbReference type="ChEBI" id="CHEBI:58525"/>
        <dbReference type="EC" id="4.3.2.10"/>
    </reaction>
</comment>
<comment type="pathway">
    <text>Amino-acid biosynthesis; L-histidine biosynthesis; L-histidine from 5-phospho-alpha-D-ribose 1-diphosphate: step 5/9.</text>
</comment>
<comment type="subunit">
    <text evidence="1">Heterodimer of HisH and HisF.</text>
</comment>
<comment type="subcellular location">
    <subcellularLocation>
        <location evidence="1">Cytoplasm</location>
    </subcellularLocation>
</comment>
<comment type="similarity">
    <text evidence="3">Belongs to the HisA/HisF family.</text>
</comment>
<sequence>MTAKRIIACLDVKNGRVVKGVNFLNLKDKGDPVELASRYEEEGADEIVFLDITATIEGRKALLEVVKNTASVLSIPLTVGGGIRTIEDVSRILGNGADKVSINTAAVENKKIITEASEQFGAQAIVVAIDVKRVNNSFIVFTRSGTYNTGIDAIQWAKEVEKLGAGEILLTSIDKDGTREGYDIELTKEVNNSVNIPVIASGGAGKMEHFYEVLKVADAALAAGVFHDGVIKIPELKRFLLEKGIEVRV</sequence>
<dbReference type="EC" id="4.3.2.10"/>
<dbReference type="EMBL" id="BA000023">
    <property type="protein sequence ID" value="BAK54589.1"/>
    <property type="molecule type" value="Genomic_DNA"/>
</dbReference>
<dbReference type="RefSeq" id="WP_010979511.1">
    <property type="nucleotide sequence ID" value="NC_003106.2"/>
</dbReference>
<dbReference type="SMR" id="Q970Z0"/>
<dbReference type="STRING" id="273063.STK_14620"/>
<dbReference type="GeneID" id="1459497"/>
<dbReference type="KEGG" id="sto:STK_14620"/>
<dbReference type="PATRIC" id="fig|273063.9.peg.1668"/>
<dbReference type="eggNOG" id="arCOG00617">
    <property type="taxonomic scope" value="Archaea"/>
</dbReference>
<dbReference type="OrthoDB" id="6261at2157"/>
<dbReference type="UniPathway" id="UPA00031">
    <property type="reaction ID" value="UER00010"/>
</dbReference>
<dbReference type="Proteomes" id="UP000001015">
    <property type="component" value="Chromosome"/>
</dbReference>
<dbReference type="GO" id="GO:0005737">
    <property type="term" value="C:cytoplasm"/>
    <property type="evidence" value="ECO:0007669"/>
    <property type="project" value="UniProtKB-SubCell"/>
</dbReference>
<dbReference type="GO" id="GO:0000107">
    <property type="term" value="F:imidazoleglycerol-phosphate synthase activity"/>
    <property type="evidence" value="ECO:0007669"/>
    <property type="project" value="UniProtKB-UniRule"/>
</dbReference>
<dbReference type="GO" id="GO:0016829">
    <property type="term" value="F:lyase activity"/>
    <property type="evidence" value="ECO:0007669"/>
    <property type="project" value="UniProtKB-KW"/>
</dbReference>
<dbReference type="GO" id="GO:0000105">
    <property type="term" value="P:L-histidine biosynthetic process"/>
    <property type="evidence" value="ECO:0007669"/>
    <property type="project" value="UniProtKB-UniRule"/>
</dbReference>
<dbReference type="CDD" id="cd04731">
    <property type="entry name" value="HisF"/>
    <property type="match status" value="1"/>
</dbReference>
<dbReference type="FunFam" id="3.20.20.70:FF:000006">
    <property type="entry name" value="Imidazole glycerol phosphate synthase subunit HisF"/>
    <property type="match status" value="1"/>
</dbReference>
<dbReference type="Gene3D" id="3.20.20.70">
    <property type="entry name" value="Aldolase class I"/>
    <property type="match status" value="1"/>
</dbReference>
<dbReference type="HAMAP" id="MF_01013">
    <property type="entry name" value="HisF"/>
    <property type="match status" value="1"/>
</dbReference>
<dbReference type="InterPro" id="IPR013785">
    <property type="entry name" value="Aldolase_TIM"/>
</dbReference>
<dbReference type="InterPro" id="IPR006062">
    <property type="entry name" value="His_biosynth"/>
</dbReference>
<dbReference type="InterPro" id="IPR004651">
    <property type="entry name" value="HisF"/>
</dbReference>
<dbReference type="InterPro" id="IPR050064">
    <property type="entry name" value="IGPS_HisA/HisF"/>
</dbReference>
<dbReference type="InterPro" id="IPR011060">
    <property type="entry name" value="RibuloseP-bd_barrel"/>
</dbReference>
<dbReference type="NCBIfam" id="TIGR00735">
    <property type="entry name" value="hisF"/>
    <property type="match status" value="1"/>
</dbReference>
<dbReference type="PANTHER" id="PTHR21235:SF2">
    <property type="entry name" value="IMIDAZOLE GLYCEROL PHOSPHATE SYNTHASE HISHF"/>
    <property type="match status" value="1"/>
</dbReference>
<dbReference type="PANTHER" id="PTHR21235">
    <property type="entry name" value="IMIDAZOLE GLYCEROL PHOSPHATE SYNTHASE SUBUNIT HISF/H IGP SYNTHASE SUBUNIT HISF/H"/>
    <property type="match status" value="1"/>
</dbReference>
<dbReference type="Pfam" id="PF00977">
    <property type="entry name" value="His_biosynth"/>
    <property type="match status" value="1"/>
</dbReference>
<dbReference type="SUPFAM" id="SSF51366">
    <property type="entry name" value="Ribulose-phoshate binding barrel"/>
    <property type="match status" value="1"/>
</dbReference>
<name>HIS6_SULTO</name>
<evidence type="ECO:0000250" key="1"/>
<evidence type="ECO:0000255" key="2"/>
<evidence type="ECO:0000305" key="3"/>